<comment type="function">
    <text>Strong inhibitor of papain and ficin but poor inhibitor of cathepsin H, B and L.</text>
</comment>
<comment type="similarity">
    <text evidence="1">Belongs to the cystatin family.</text>
</comment>
<name>CYTA_HELAN</name>
<organism>
    <name type="scientific">Helianthus annuus</name>
    <name type="common">Common sunflower</name>
    <dbReference type="NCBI Taxonomy" id="4232"/>
    <lineage>
        <taxon>Eukaryota</taxon>
        <taxon>Viridiplantae</taxon>
        <taxon>Streptophyta</taxon>
        <taxon>Embryophyta</taxon>
        <taxon>Tracheophyta</taxon>
        <taxon>Spermatophyta</taxon>
        <taxon>Magnoliopsida</taxon>
        <taxon>eudicotyledons</taxon>
        <taxon>Gunneridae</taxon>
        <taxon>Pentapetalae</taxon>
        <taxon>asterids</taxon>
        <taxon>campanulids</taxon>
        <taxon>Asterales</taxon>
        <taxon>Asteraceae</taxon>
        <taxon>Asteroideae</taxon>
        <taxon>Heliantheae alliance</taxon>
        <taxon>Heliantheae</taxon>
        <taxon>Helianthus</taxon>
    </lineage>
</organism>
<proteinExistence type="evidence at protein level"/>
<keyword id="KW-0903">Direct protein sequencing</keyword>
<keyword id="KW-0646">Protease inhibitor</keyword>
<keyword id="KW-0789">Thiol protease inhibitor</keyword>
<dbReference type="PIR" id="JC4791">
    <property type="entry name" value="JC4791"/>
</dbReference>
<dbReference type="SMR" id="Q10992"/>
<dbReference type="MEROPS" id="I25.014"/>
<dbReference type="GO" id="GO:0004869">
    <property type="term" value="F:cysteine-type endopeptidase inhibitor activity"/>
    <property type="evidence" value="ECO:0007669"/>
    <property type="project" value="UniProtKB-KW"/>
</dbReference>
<dbReference type="CDD" id="cd00042">
    <property type="entry name" value="CY"/>
    <property type="match status" value="1"/>
</dbReference>
<dbReference type="FunFam" id="3.10.450.10:FF:000016">
    <property type="entry name" value="Cysteine proteinase inhibitor"/>
    <property type="match status" value="1"/>
</dbReference>
<dbReference type="Gene3D" id="3.10.450.10">
    <property type="match status" value="1"/>
</dbReference>
<dbReference type="InterPro" id="IPR027214">
    <property type="entry name" value="Cystatin"/>
</dbReference>
<dbReference type="InterPro" id="IPR000010">
    <property type="entry name" value="Cystatin_dom"/>
</dbReference>
<dbReference type="InterPro" id="IPR046350">
    <property type="entry name" value="Cystatin_sf"/>
</dbReference>
<dbReference type="InterPro" id="IPR018073">
    <property type="entry name" value="Prot_inh_cystat_CS"/>
</dbReference>
<dbReference type="PANTHER" id="PTHR11413">
    <property type="entry name" value="CYSTATIN FAMILY MEMBER"/>
    <property type="match status" value="1"/>
</dbReference>
<dbReference type="PANTHER" id="PTHR11413:SF116">
    <property type="entry name" value="MULTICYSTATIN"/>
    <property type="match status" value="1"/>
</dbReference>
<dbReference type="Pfam" id="PF16845">
    <property type="entry name" value="SQAPI"/>
    <property type="match status" value="1"/>
</dbReference>
<dbReference type="SMART" id="SM00043">
    <property type="entry name" value="CY"/>
    <property type="match status" value="1"/>
</dbReference>
<dbReference type="SUPFAM" id="SSF54403">
    <property type="entry name" value="Cystatin/monellin"/>
    <property type="match status" value="1"/>
</dbReference>
<dbReference type="PROSITE" id="PS00287">
    <property type="entry name" value="CYSTATIN"/>
    <property type="match status" value="1"/>
</dbReference>
<accession>Q10992</accession>
<evidence type="ECO:0000305" key="1"/>
<reference key="1">
    <citation type="journal article" date="1996" name="J. Biochem.">
        <title>Purification, characterization, and sequencing of two cysteine proteinase inhibitors, Sca and Scb, from sunflower (Helianthus annuus) seeds.</title>
        <authorList>
            <person name="Kouzuma Y."/>
            <person name="Kawano K."/>
            <person name="Kimura M."/>
            <person name="Yamasaki N."/>
            <person name="Kadowaki T."/>
            <person name="Yamamoto K."/>
        </authorList>
    </citation>
    <scope>PROTEIN SEQUENCE</scope>
    <source>
        <tissue>Seed</tissue>
    </source>
</reference>
<feature type="chain" id="PRO_0000207154" description="Cysteine proteinase inhibitor A">
    <location>
        <begin position="1"/>
        <end position="82"/>
    </location>
</feature>
<protein>
    <recommendedName>
        <fullName>Cysteine proteinase inhibitor A</fullName>
    </recommendedName>
    <alternativeName>
        <fullName>Cystatin-A</fullName>
    </alternativeName>
    <alternativeName>
        <fullName>SCA</fullName>
    </alternativeName>
</protein>
<sequence>SLEIDELARFAVDEHNKKQNALLEFGKVVNTKEQVVAGKMYYITLEATNGGVKKTYEAKVWVKPWENFKELQEFKPVDAATS</sequence>